<feature type="chain" id="PRO_0000358521" description="NAD(P)H-quinone oxidoreductase subunit K, chloroplastic">
    <location>
        <begin position="1"/>
        <end position="225"/>
    </location>
</feature>
<feature type="binding site" evidence="1">
    <location>
        <position position="43"/>
    </location>
    <ligand>
        <name>[4Fe-4S] cluster</name>
        <dbReference type="ChEBI" id="CHEBI:49883"/>
    </ligand>
</feature>
<feature type="binding site" evidence="1">
    <location>
        <position position="44"/>
    </location>
    <ligand>
        <name>[4Fe-4S] cluster</name>
        <dbReference type="ChEBI" id="CHEBI:49883"/>
    </ligand>
</feature>
<feature type="binding site" evidence="1">
    <location>
        <position position="108"/>
    </location>
    <ligand>
        <name>[4Fe-4S] cluster</name>
        <dbReference type="ChEBI" id="CHEBI:49883"/>
    </ligand>
</feature>
<feature type="binding site" evidence="1">
    <location>
        <position position="139"/>
    </location>
    <ligand>
        <name>[4Fe-4S] cluster</name>
        <dbReference type="ChEBI" id="CHEBI:49883"/>
    </ligand>
</feature>
<gene>
    <name evidence="1" type="primary">ndhK</name>
</gene>
<comment type="function">
    <text evidence="1">NDH shuttles electrons from NAD(P)H:plastoquinone, via FMN and iron-sulfur (Fe-S) centers, to quinones in the photosynthetic chain and possibly in a chloroplast respiratory chain. The immediate electron acceptor for the enzyme in this species is believed to be plastoquinone. Couples the redox reaction to proton translocation, and thus conserves the redox energy in a proton gradient.</text>
</comment>
<comment type="catalytic activity">
    <reaction evidence="1">
        <text>a plastoquinone + NADH + (n+1) H(+)(in) = a plastoquinol + NAD(+) + n H(+)(out)</text>
        <dbReference type="Rhea" id="RHEA:42608"/>
        <dbReference type="Rhea" id="RHEA-COMP:9561"/>
        <dbReference type="Rhea" id="RHEA-COMP:9562"/>
        <dbReference type="ChEBI" id="CHEBI:15378"/>
        <dbReference type="ChEBI" id="CHEBI:17757"/>
        <dbReference type="ChEBI" id="CHEBI:57540"/>
        <dbReference type="ChEBI" id="CHEBI:57945"/>
        <dbReference type="ChEBI" id="CHEBI:62192"/>
    </reaction>
</comment>
<comment type="catalytic activity">
    <reaction evidence="1">
        <text>a plastoquinone + NADPH + (n+1) H(+)(in) = a plastoquinol + NADP(+) + n H(+)(out)</text>
        <dbReference type="Rhea" id="RHEA:42612"/>
        <dbReference type="Rhea" id="RHEA-COMP:9561"/>
        <dbReference type="Rhea" id="RHEA-COMP:9562"/>
        <dbReference type="ChEBI" id="CHEBI:15378"/>
        <dbReference type="ChEBI" id="CHEBI:17757"/>
        <dbReference type="ChEBI" id="CHEBI:57783"/>
        <dbReference type="ChEBI" id="CHEBI:58349"/>
        <dbReference type="ChEBI" id="CHEBI:62192"/>
    </reaction>
</comment>
<comment type="cofactor">
    <cofactor evidence="1">
        <name>[4Fe-4S] cluster</name>
        <dbReference type="ChEBI" id="CHEBI:49883"/>
    </cofactor>
    <text evidence="1">Binds 1 [4Fe-4S] cluster.</text>
</comment>
<comment type="subunit">
    <text evidence="1">NDH is composed of at least 16 different subunits, 5 of which are encoded in the nucleus.</text>
</comment>
<comment type="subcellular location">
    <subcellularLocation>
        <location evidence="1">Plastid</location>
        <location evidence="1">Chloroplast thylakoid membrane</location>
        <topology evidence="1">Peripheral membrane protein</topology>
        <orientation evidence="1">Stromal side</orientation>
    </subcellularLocation>
</comment>
<comment type="similarity">
    <text evidence="1">Belongs to the complex I 20 kDa subunit family.</text>
</comment>
<comment type="sequence caution" evidence="2">
    <conflict type="erroneous initiation">
        <sequence resource="EMBL-CDS" id="CAC88048"/>
    </conflict>
</comment>
<protein>
    <recommendedName>
        <fullName evidence="1">NAD(P)H-quinone oxidoreductase subunit K, chloroplastic</fullName>
        <ecNumber evidence="1">7.1.1.-</ecNumber>
    </recommendedName>
    <alternativeName>
        <fullName evidence="1">NAD(P)H dehydrogenase subunit K</fullName>
    </alternativeName>
    <alternativeName>
        <fullName evidence="1">NADH-plastoquinone oxidoreductase subunit K</fullName>
    </alternativeName>
</protein>
<dbReference type="EC" id="7.1.1.-" evidence="1"/>
<dbReference type="EMBL" id="AJ316582">
    <property type="protein sequence ID" value="CAC88048.1"/>
    <property type="status" value="ALT_INIT"/>
    <property type="molecule type" value="Genomic_DNA"/>
</dbReference>
<dbReference type="RefSeq" id="NP_783236.2">
    <property type="nucleotide sequence ID" value="NC_004561.1"/>
</dbReference>
<dbReference type="SMR" id="Q8S8X1"/>
<dbReference type="GeneID" id="806456"/>
<dbReference type="GO" id="GO:0009535">
    <property type="term" value="C:chloroplast thylakoid membrane"/>
    <property type="evidence" value="ECO:0007669"/>
    <property type="project" value="UniProtKB-SubCell"/>
</dbReference>
<dbReference type="GO" id="GO:0045271">
    <property type="term" value="C:respiratory chain complex I"/>
    <property type="evidence" value="ECO:0007669"/>
    <property type="project" value="TreeGrafter"/>
</dbReference>
<dbReference type="GO" id="GO:0051539">
    <property type="term" value="F:4 iron, 4 sulfur cluster binding"/>
    <property type="evidence" value="ECO:0007669"/>
    <property type="project" value="UniProtKB-KW"/>
</dbReference>
<dbReference type="GO" id="GO:0005506">
    <property type="term" value="F:iron ion binding"/>
    <property type="evidence" value="ECO:0007669"/>
    <property type="project" value="UniProtKB-UniRule"/>
</dbReference>
<dbReference type="GO" id="GO:0008137">
    <property type="term" value="F:NADH dehydrogenase (ubiquinone) activity"/>
    <property type="evidence" value="ECO:0007669"/>
    <property type="project" value="InterPro"/>
</dbReference>
<dbReference type="GO" id="GO:0048038">
    <property type="term" value="F:quinone binding"/>
    <property type="evidence" value="ECO:0007669"/>
    <property type="project" value="UniProtKB-KW"/>
</dbReference>
<dbReference type="GO" id="GO:0009060">
    <property type="term" value="P:aerobic respiration"/>
    <property type="evidence" value="ECO:0007669"/>
    <property type="project" value="TreeGrafter"/>
</dbReference>
<dbReference type="GO" id="GO:0015990">
    <property type="term" value="P:electron transport coupled proton transport"/>
    <property type="evidence" value="ECO:0007669"/>
    <property type="project" value="TreeGrafter"/>
</dbReference>
<dbReference type="GO" id="GO:0019684">
    <property type="term" value="P:photosynthesis, light reaction"/>
    <property type="evidence" value="ECO:0007669"/>
    <property type="project" value="UniProtKB-UniRule"/>
</dbReference>
<dbReference type="FunFam" id="3.40.50.12280:FF:000003">
    <property type="entry name" value="NAD(P)H-quinone oxidoreductase subunit K, chloroplastic"/>
    <property type="match status" value="1"/>
</dbReference>
<dbReference type="Gene3D" id="3.40.50.12280">
    <property type="match status" value="1"/>
</dbReference>
<dbReference type="HAMAP" id="MF_01356">
    <property type="entry name" value="NDH1_NuoB"/>
    <property type="match status" value="1"/>
</dbReference>
<dbReference type="InterPro" id="IPR006137">
    <property type="entry name" value="NADH_UbQ_OxRdtase-like_20kDa"/>
</dbReference>
<dbReference type="InterPro" id="IPR006138">
    <property type="entry name" value="NADH_UQ_OxRdtase_20Kd_su"/>
</dbReference>
<dbReference type="NCBIfam" id="TIGR01957">
    <property type="entry name" value="nuoB_fam"/>
    <property type="match status" value="1"/>
</dbReference>
<dbReference type="NCBIfam" id="NF005012">
    <property type="entry name" value="PRK06411.1"/>
    <property type="match status" value="1"/>
</dbReference>
<dbReference type="PANTHER" id="PTHR11995">
    <property type="entry name" value="NADH DEHYDROGENASE"/>
    <property type="match status" value="1"/>
</dbReference>
<dbReference type="PANTHER" id="PTHR11995:SF14">
    <property type="entry name" value="NADH DEHYDROGENASE [UBIQUINONE] IRON-SULFUR PROTEIN 7, MITOCHONDRIAL"/>
    <property type="match status" value="1"/>
</dbReference>
<dbReference type="Pfam" id="PF01058">
    <property type="entry name" value="Oxidored_q6"/>
    <property type="match status" value="1"/>
</dbReference>
<dbReference type="SUPFAM" id="SSF56770">
    <property type="entry name" value="HydA/Nqo6-like"/>
    <property type="match status" value="1"/>
</dbReference>
<dbReference type="PROSITE" id="PS01150">
    <property type="entry name" value="COMPLEX1_20K"/>
    <property type="match status" value="1"/>
</dbReference>
<reference key="1">
    <citation type="journal article" date="2002" name="Mol. Biol. Evol.">
        <title>The plastid chromosome of Atropa belladonna and its comparison with that of Nicotiana tabacum: the role of RNA editing in generating divergence in the process of plant speciation.</title>
        <authorList>
            <person name="Schmitz-Linneweber C."/>
            <person name="Regel R."/>
            <person name="Du T.G."/>
            <person name="Hupfer H."/>
            <person name="Herrmann R.G."/>
            <person name="Maier R.M."/>
        </authorList>
    </citation>
    <scope>NUCLEOTIDE SEQUENCE [LARGE SCALE GENOMIC DNA]</scope>
    <source>
        <strain>cv. Ab5p(kan)</strain>
    </source>
</reference>
<evidence type="ECO:0000255" key="1">
    <source>
        <dbReference type="HAMAP-Rule" id="MF_01356"/>
    </source>
</evidence>
<evidence type="ECO:0000305" key="2"/>
<geneLocation type="chloroplast"/>
<organism>
    <name type="scientific">Atropa belladonna</name>
    <name type="common">Belladonna</name>
    <name type="synonym">Deadly nightshade</name>
    <dbReference type="NCBI Taxonomy" id="33113"/>
    <lineage>
        <taxon>Eukaryota</taxon>
        <taxon>Viridiplantae</taxon>
        <taxon>Streptophyta</taxon>
        <taxon>Embryophyta</taxon>
        <taxon>Tracheophyta</taxon>
        <taxon>Spermatophyta</taxon>
        <taxon>Magnoliopsida</taxon>
        <taxon>eudicotyledons</taxon>
        <taxon>Gunneridae</taxon>
        <taxon>Pentapetalae</taxon>
        <taxon>asterids</taxon>
        <taxon>lamiids</taxon>
        <taxon>Solanales</taxon>
        <taxon>Solanaceae</taxon>
        <taxon>Solanoideae</taxon>
        <taxon>Hyoscyameae</taxon>
        <taxon>Atropa</taxon>
    </lineage>
</organism>
<accession>Q8S8X1</accession>
<sequence>MNSIQFPLLDRTAQNSVISTTLNDLSNWSRLSSLWPLLYGTSCCFIEFASLIGSRFDFDRYGLVPRSSPRQADLILTAGTVTMKMAPSLVRLYEQMPEPKYVIAMGACTITGGMFSTDSYSTVRGVDKLIPVDVYLPGCPPKPEAVIDAITKLRKKISRELYEDRIRSQRVNRCFTTNHKFHVRRSIHTGNYDQRVLYQPPSTSEIPTEIFFKYKNSVSSPELVN</sequence>
<proteinExistence type="inferred from homology"/>
<keyword id="KW-0004">4Fe-4S</keyword>
<keyword id="KW-0150">Chloroplast</keyword>
<keyword id="KW-0408">Iron</keyword>
<keyword id="KW-0411">Iron-sulfur</keyword>
<keyword id="KW-0472">Membrane</keyword>
<keyword id="KW-0479">Metal-binding</keyword>
<keyword id="KW-0520">NAD</keyword>
<keyword id="KW-0521">NADP</keyword>
<keyword id="KW-0934">Plastid</keyword>
<keyword id="KW-0618">Plastoquinone</keyword>
<keyword id="KW-0874">Quinone</keyword>
<keyword id="KW-0793">Thylakoid</keyword>
<keyword id="KW-1278">Translocase</keyword>
<keyword id="KW-0813">Transport</keyword>
<name>NDHK_ATRBE</name>